<protein>
    <recommendedName>
        <fullName evidence="1">Isoleucine--tRNA ligase 1</fullName>
        <ecNumber evidence="1">6.1.1.5</ecNumber>
    </recommendedName>
    <alternativeName>
        <fullName evidence="1">Isoleucyl-tRNA synthetase 1</fullName>
        <shortName evidence="1">IleRS 1</shortName>
    </alternativeName>
</protein>
<comment type="function">
    <text evidence="1">Catalyzes the attachment of isoleucine to tRNA(Ile). As IleRS can inadvertently accommodate and process structurally similar amino acids such as valine, to avoid such errors it has two additional distinct tRNA(Ile)-dependent editing activities. One activity is designated as 'pretransfer' editing and involves the hydrolysis of activated Val-AMP. The other activity is designated 'posttransfer' editing and involves deacylation of mischarged Val-tRNA(Ile).</text>
</comment>
<comment type="catalytic activity">
    <reaction evidence="1">
        <text>tRNA(Ile) + L-isoleucine + ATP = L-isoleucyl-tRNA(Ile) + AMP + diphosphate</text>
        <dbReference type="Rhea" id="RHEA:11060"/>
        <dbReference type="Rhea" id="RHEA-COMP:9666"/>
        <dbReference type="Rhea" id="RHEA-COMP:9695"/>
        <dbReference type="ChEBI" id="CHEBI:30616"/>
        <dbReference type="ChEBI" id="CHEBI:33019"/>
        <dbReference type="ChEBI" id="CHEBI:58045"/>
        <dbReference type="ChEBI" id="CHEBI:78442"/>
        <dbReference type="ChEBI" id="CHEBI:78528"/>
        <dbReference type="ChEBI" id="CHEBI:456215"/>
        <dbReference type="EC" id="6.1.1.5"/>
    </reaction>
</comment>
<comment type="cofactor">
    <cofactor evidence="1">
        <name>Zn(2+)</name>
        <dbReference type="ChEBI" id="CHEBI:29105"/>
    </cofactor>
    <text evidence="1">Binds 1 zinc ion per subunit.</text>
</comment>
<comment type="subunit">
    <text evidence="1">Monomer.</text>
</comment>
<comment type="subcellular location">
    <subcellularLocation>
        <location evidence="1">Cytoplasm</location>
    </subcellularLocation>
</comment>
<comment type="domain">
    <text evidence="1">IleRS has two distinct active sites: one for aminoacylation and one for editing. The misactivated valine is translocated from the active site to the editing site, which sterically excludes the correctly activated isoleucine. The single editing site contains two valyl binding pockets, one specific for each substrate (Val-AMP or Val-tRNA(Ile)).</text>
</comment>
<comment type="similarity">
    <text evidence="1">Belongs to the class-I aminoacyl-tRNA synthetase family. IleS type 1 subfamily.</text>
</comment>
<dbReference type="EC" id="6.1.1.5" evidence="1"/>
<dbReference type="EMBL" id="AE016877">
    <property type="protein sequence ID" value="AAP10816.1"/>
    <property type="molecule type" value="Genomic_DNA"/>
</dbReference>
<dbReference type="RefSeq" id="NP_833615.1">
    <property type="nucleotide sequence ID" value="NC_004722.1"/>
</dbReference>
<dbReference type="SMR" id="Q819R4"/>
<dbReference type="STRING" id="226900.BC_3895"/>
<dbReference type="KEGG" id="bce:BC3895"/>
<dbReference type="PATRIC" id="fig|226900.8.peg.4017"/>
<dbReference type="HOGENOM" id="CLU_001493_7_0_9"/>
<dbReference type="OrthoDB" id="9810365at2"/>
<dbReference type="Proteomes" id="UP000001417">
    <property type="component" value="Chromosome"/>
</dbReference>
<dbReference type="GO" id="GO:0005829">
    <property type="term" value="C:cytosol"/>
    <property type="evidence" value="ECO:0000318"/>
    <property type="project" value="GO_Central"/>
</dbReference>
<dbReference type="GO" id="GO:0002161">
    <property type="term" value="F:aminoacyl-tRNA deacylase activity"/>
    <property type="evidence" value="ECO:0007669"/>
    <property type="project" value="InterPro"/>
</dbReference>
<dbReference type="GO" id="GO:0005524">
    <property type="term" value="F:ATP binding"/>
    <property type="evidence" value="ECO:0007669"/>
    <property type="project" value="UniProtKB-UniRule"/>
</dbReference>
<dbReference type="GO" id="GO:0004822">
    <property type="term" value="F:isoleucine-tRNA ligase activity"/>
    <property type="evidence" value="ECO:0000318"/>
    <property type="project" value="GO_Central"/>
</dbReference>
<dbReference type="GO" id="GO:0000049">
    <property type="term" value="F:tRNA binding"/>
    <property type="evidence" value="ECO:0007669"/>
    <property type="project" value="InterPro"/>
</dbReference>
<dbReference type="GO" id="GO:0008270">
    <property type="term" value="F:zinc ion binding"/>
    <property type="evidence" value="ECO:0007669"/>
    <property type="project" value="UniProtKB-UniRule"/>
</dbReference>
<dbReference type="GO" id="GO:0006428">
    <property type="term" value="P:isoleucyl-tRNA aminoacylation"/>
    <property type="evidence" value="ECO:0000318"/>
    <property type="project" value="GO_Central"/>
</dbReference>
<dbReference type="CDD" id="cd07960">
    <property type="entry name" value="Anticodon_Ia_Ile_BEm"/>
    <property type="match status" value="1"/>
</dbReference>
<dbReference type="CDD" id="cd00818">
    <property type="entry name" value="IleRS_core"/>
    <property type="match status" value="1"/>
</dbReference>
<dbReference type="FunFam" id="1.10.10.830:FF:000001">
    <property type="entry name" value="Isoleucine--tRNA ligase"/>
    <property type="match status" value="1"/>
</dbReference>
<dbReference type="FunFam" id="1.10.730.20:FF:000001">
    <property type="entry name" value="Isoleucine--tRNA ligase"/>
    <property type="match status" value="1"/>
</dbReference>
<dbReference type="FunFam" id="3.40.50.620:FF:000152">
    <property type="entry name" value="Isoleucine--tRNA ligase"/>
    <property type="match status" value="1"/>
</dbReference>
<dbReference type="FunFam" id="3.90.740.10:FF:000006">
    <property type="entry name" value="Isoleucine--tRNA ligase"/>
    <property type="match status" value="1"/>
</dbReference>
<dbReference type="Gene3D" id="1.10.730.20">
    <property type="match status" value="1"/>
</dbReference>
<dbReference type="Gene3D" id="3.40.50.620">
    <property type="entry name" value="HUPs"/>
    <property type="match status" value="2"/>
</dbReference>
<dbReference type="Gene3D" id="1.10.10.830">
    <property type="entry name" value="Ile-tRNA synthetase CP2 domain-like"/>
    <property type="match status" value="1"/>
</dbReference>
<dbReference type="Gene3D" id="3.90.740.10">
    <property type="entry name" value="Valyl/Leucyl/Isoleucyl-tRNA synthetase, editing domain"/>
    <property type="match status" value="1"/>
</dbReference>
<dbReference type="HAMAP" id="MF_02002">
    <property type="entry name" value="Ile_tRNA_synth_type1"/>
    <property type="match status" value="1"/>
</dbReference>
<dbReference type="InterPro" id="IPR001412">
    <property type="entry name" value="aa-tRNA-synth_I_CS"/>
</dbReference>
<dbReference type="InterPro" id="IPR002300">
    <property type="entry name" value="aa-tRNA-synth_Ia"/>
</dbReference>
<dbReference type="InterPro" id="IPR033708">
    <property type="entry name" value="Anticodon_Ile_BEm"/>
</dbReference>
<dbReference type="InterPro" id="IPR002301">
    <property type="entry name" value="Ile-tRNA-ligase"/>
</dbReference>
<dbReference type="InterPro" id="IPR023585">
    <property type="entry name" value="Ile-tRNA-ligase_type1"/>
</dbReference>
<dbReference type="InterPro" id="IPR050081">
    <property type="entry name" value="Ile-tRNA_ligase"/>
</dbReference>
<dbReference type="InterPro" id="IPR013155">
    <property type="entry name" value="M/V/L/I-tRNA-synth_anticd-bd"/>
</dbReference>
<dbReference type="InterPro" id="IPR014729">
    <property type="entry name" value="Rossmann-like_a/b/a_fold"/>
</dbReference>
<dbReference type="InterPro" id="IPR009080">
    <property type="entry name" value="tRNAsynth_Ia_anticodon-bd"/>
</dbReference>
<dbReference type="InterPro" id="IPR009008">
    <property type="entry name" value="Val/Leu/Ile-tRNA-synth_edit"/>
</dbReference>
<dbReference type="InterPro" id="IPR010663">
    <property type="entry name" value="Znf_FPG/IleRS"/>
</dbReference>
<dbReference type="NCBIfam" id="TIGR00392">
    <property type="entry name" value="ileS"/>
    <property type="match status" value="1"/>
</dbReference>
<dbReference type="PANTHER" id="PTHR42765:SF1">
    <property type="entry name" value="ISOLEUCINE--TRNA LIGASE, MITOCHONDRIAL"/>
    <property type="match status" value="1"/>
</dbReference>
<dbReference type="PANTHER" id="PTHR42765">
    <property type="entry name" value="SOLEUCYL-TRNA SYNTHETASE"/>
    <property type="match status" value="1"/>
</dbReference>
<dbReference type="Pfam" id="PF08264">
    <property type="entry name" value="Anticodon_1"/>
    <property type="match status" value="1"/>
</dbReference>
<dbReference type="Pfam" id="PF00133">
    <property type="entry name" value="tRNA-synt_1"/>
    <property type="match status" value="1"/>
</dbReference>
<dbReference type="Pfam" id="PF06827">
    <property type="entry name" value="zf-FPG_IleRS"/>
    <property type="match status" value="1"/>
</dbReference>
<dbReference type="PRINTS" id="PR00984">
    <property type="entry name" value="TRNASYNTHILE"/>
</dbReference>
<dbReference type="SUPFAM" id="SSF47323">
    <property type="entry name" value="Anticodon-binding domain of a subclass of class I aminoacyl-tRNA synthetases"/>
    <property type="match status" value="1"/>
</dbReference>
<dbReference type="SUPFAM" id="SSF52374">
    <property type="entry name" value="Nucleotidylyl transferase"/>
    <property type="match status" value="1"/>
</dbReference>
<dbReference type="SUPFAM" id="SSF50677">
    <property type="entry name" value="ValRS/IleRS/LeuRS editing domain"/>
    <property type="match status" value="1"/>
</dbReference>
<dbReference type="PROSITE" id="PS00178">
    <property type="entry name" value="AA_TRNA_LIGASE_I"/>
    <property type="match status" value="1"/>
</dbReference>
<name>SYI1_BACCR</name>
<sequence length="921" mass="104562">MEYKNTLLMPKTEFPMRGNLPKREPAMQEKWAEMNIYEKVQEHTKGRPLFVLHDGPPYANGDIHMGHALNKVLKDFIVRYKSMTGFSAPYVPGWDTHGLPIEQALTNKGVKRKEMTVAEFRKLCAEYAYEQVERQREQFKRLGVRADWDNPYITLEPAYEAQQIKVFGDMAKKGYIYKGQKPVYWSPTSESALAEAEIEYQDKKSASIYVAFPVKDGKNVLEGDEKYIIWTTTPWTLPANLGISVHPELEYSIVKVNDEKYIIASELFETVAKTLEWENAEVVKTVKGSELEYTVAKHPFYDRDSLVMLGDHVTTDAGTGCVHTAPGHGEDDFVVGKKYGLEVLCPVDDKGVLTNEAPGFEGLFYDKANKPITEKLEEVGALLKLTFITHSYPHDWRTKKPIIFRATAQWFASIEAFRKELIEAVAETKWVPAWGETRLHNMVRDRGDWCISRQRAWGVPIPVFYAENGDPIITDETINHVADLFREHGSNVWFEREAKDLLPEGFTHPGSPNGEFRKETDIMDVWFDSGSSHQAVLEEREDLQRPADLYLEGSDQYRGWFNSSLSTAVAVTGKAPYKGVLSHGFVLDGEGRKMSKSIGNIVVPKKIMDQLGGDILRLWVSSVDYQSDVRISDDILKQVAEVYRKIRNTFRFLLGNLDDFKPSENAVAVAELREVDRYMLVKLNDLITKVKEAYETYDFAAVYHAIHNFCTIDLSSFYLDFAKDILYIEGANHEDRRAIQTVLYDVLVALTKLVTPILPHTADEVWPYIPGVTEESVQLTDMPEAVQLDDAEALKTKWDAFMTLRDDVLKALEVARNEKVIGKSLNASITLYPTAEMKAMLESISEDLKQLFIVSEYKLGGMMDEAPADAPKYEHTAVVVAQATGETCERCWVVSETIGKDAEHETLCERCATVVKENYVK</sequence>
<proteinExistence type="inferred from homology"/>
<reference key="1">
    <citation type="journal article" date="2003" name="Nature">
        <title>Genome sequence of Bacillus cereus and comparative analysis with Bacillus anthracis.</title>
        <authorList>
            <person name="Ivanova N."/>
            <person name="Sorokin A."/>
            <person name="Anderson I."/>
            <person name="Galleron N."/>
            <person name="Candelon B."/>
            <person name="Kapatral V."/>
            <person name="Bhattacharyya A."/>
            <person name="Reznik G."/>
            <person name="Mikhailova N."/>
            <person name="Lapidus A."/>
            <person name="Chu L."/>
            <person name="Mazur M."/>
            <person name="Goltsman E."/>
            <person name="Larsen N."/>
            <person name="D'Souza M."/>
            <person name="Walunas T."/>
            <person name="Grechkin Y."/>
            <person name="Pusch G."/>
            <person name="Haselkorn R."/>
            <person name="Fonstein M."/>
            <person name="Ehrlich S.D."/>
            <person name="Overbeek R."/>
            <person name="Kyrpides N.C."/>
        </authorList>
    </citation>
    <scope>NUCLEOTIDE SEQUENCE [LARGE SCALE GENOMIC DNA]</scope>
    <source>
        <strain>ATCC 14579 / DSM 31 / CCUG 7414 / JCM 2152 / NBRC 15305 / NCIMB 9373 / NCTC 2599 / NRRL B-3711</strain>
    </source>
</reference>
<gene>
    <name evidence="1" type="primary">ileS1</name>
    <name type="ordered locus">BC_3895</name>
</gene>
<evidence type="ECO:0000255" key="1">
    <source>
        <dbReference type="HAMAP-Rule" id="MF_02002"/>
    </source>
</evidence>
<keyword id="KW-0030">Aminoacyl-tRNA synthetase</keyword>
<keyword id="KW-0067">ATP-binding</keyword>
<keyword id="KW-0963">Cytoplasm</keyword>
<keyword id="KW-0436">Ligase</keyword>
<keyword id="KW-0479">Metal-binding</keyword>
<keyword id="KW-0547">Nucleotide-binding</keyword>
<keyword id="KW-0648">Protein biosynthesis</keyword>
<keyword id="KW-1185">Reference proteome</keyword>
<keyword id="KW-0862">Zinc</keyword>
<accession>Q819R4</accession>
<organism>
    <name type="scientific">Bacillus cereus (strain ATCC 14579 / DSM 31 / CCUG 7414 / JCM 2152 / NBRC 15305 / NCIMB 9373 / NCTC 2599 / NRRL B-3711)</name>
    <dbReference type="NCBI Taxonomy" id="226900"/>
    <lineage>
        <taxon>Bacteria</taxon>
        <taxon>Bacillati</taxon>
        <taxon>Bacillota</taxon>
        <taxon>Bacilli</taxon>
        <taxon>Bacillales</taxon>
        <taxon>Bacillaceae</taxon>
        <taxon>Bacillus</taxon>
        <taxon>Bacillus cereus group</taxon>
    </lineage>
</organism>
<feature type="chain" id="PRO_0000098346" description="Isoleucine--tRNA ligase 1">
    <location>
        <begin position="1"/>
        <end position="921"/>
    </location>
</feature>
<feature type="short sequence motif" description="'HIGH' region">
    <location>
        <begin position="57"/>
        <end position="67"/>
    </location>
</feature>
<feature type="short sequence motif" description="'KMSKS' region">
    <location>
        <begin position="593"/>
        <end position="597"/>
    </location>
</feature>
<feature type="binding site" evidence="1">
    <location>
        <position position="552"/>
    </location>
    <ligand>
        <name>L-isoleucyl-5'-AMP</name>
        <dbReference type="ChEBI" id="CHEBI:178002"/>
    </ligand>
</feature>
<feature type="binding site" evidence="1">
    <location>
        <position position="596"/>
    </location>
    <ligand>
        <name>ATP</name>
        <dbReference type="ChEBI" id="CHEBI:30616"/>
    </ligand>
</feature>
<feature type="binding site" evidence="1">
    <location>
        <position position="888"/>
    </location>
    <ligand>
        <name>Zn(2+)</name>
        <dbReference type="ChEBI" id="CHEBI:29105"/>
    </ligand>
</feature>
<feature type="binding site" evidence="1">
    <location>
        <position position="891"/>
    </location>
    <ligand>
        <name>Zn(2+)</name>
        <dbReference type="ChEBI" id="CHEBI:29105"/>
    </ligand>
</feature>
<feature type="binding site" evidence="1">
    <location>
        <position position="908"/>
    </location>
    <ligand>
        <name>Zn(2+)</name>
        <dbReference type="ChEBI" id="CHEBI:29105"/>
    </ligand>
</feature>
<feature type="binding site" evidence="1">
    <location>
        <position position="911"/>
    </location>
    <ligand>
        <name>Zn(2+)</name>
        <dbReference type="ChEBI" id="CHEBI:29105"/>
    </ligand>
</feature>